<name>PSBI_CALFG</name>
<geneLocation type="chloroplast"/>
<keyword id="KW-0150">Chloroplast</keyword>
<keyword id="KW-0472">Membrane</keyword>
<keyword id="KW-0602">Photosynthesis</keyword>
<keyword id="KW-0604">Photosystem II</keyword>
<keyword id="KW-0934">Plastid</keyword>
<keyword id="KW-0674">Reaction center</keyword>
<keyword id="KW-0793">Thylakoid</keyword>
<keyword id="KW-0812">Transmembrane</keyword>
<keyword id="KW-1133">Transmembrane helix</keyword>
<organism>
    <name type="scientific">Calycanthus floridus var. glaucus</name>
    <name type="common">Eastern sweetshrub</name>
    <name type="synonym">Calycanthus fertilis var. ferax</name>
    <dbReference type="NCBI Taxonomy" id="212734"/>
    <lineage>
        <taxon>Eukaryota</taxon>
        <taxon>Viridiplantae</taxon>
        <taxon>Streptophyta</taxon>
        <taxon>Embryophyta</taxon>
        <taxon>Tracheophyta</taxon>
        <taxon>Spermatophyta</taxon>
        <taxon>Magnoliopsida</taxon>
        <taxon>Magnoliidae</taxon>
        <taxon>Laurales</taxon>
        <taxon>Calycanthaceae</taxon>
        <taxon>Calycanthus</taxon>
    </lineage>
</organism>
<proteinExistence type="inferred from homology"/>
<protein>
    <recommendedName>
        <fullName evidence="1">Photosystem II reaction center protein I</fullName>
        <shortName evidence="1">PSII-I</shortName>
    </recommendedName>
    <alternativeName>
        <fullName evidence="1">PSII 4.8 kDa protein</fullName>
    </alternativeName>
</protein>
<reference key="1">
    <citation type="journal article" date="2003" name="Plant Syst. Evol.">
        <title>The chloroplast genome of the 'basal' angiosperm Calycanthus fertilis -- structural and phylogenetic analyses.</title>
        <authorList>
            <person name="Goremykin V."/>
            <person name="Hirsch-Ernst K.I."/>
            <person name="Woelfl S."/>
            <person name="Hellwig F.H."/>
        </authorList>
    </citation>
    <scope>NUCLEOTIDE SEQUENCE [LARGE SCALE GENOMIC DNA]</scope>
</reference>
<gene>
    <name evidence="1" type="primary">psbI</name>
</gene>
<comment type="function">
    <text evidence="1">One of the components of the core complex of photosystem II (PSII), required for its stability and/or assembly. PSII is a light-driven water:plastoquinone oxidoreductase that uses light energy to abstract electrons from H(2)O, generating O(2) and a proton gradient subsequently used for ATP formation. It consists of a core antenna complex that captures photons, and an electron transfer chain that converts photonic excitation into a charge separation.</text>
</comment>
<comment type="subunit">
    <text evidence="1">PSII is composed of 1 copy each of membrane proteins PsbA, PsbB, PsbC, PsbD, PsbE, PsbF, PsbH, PsbI, PsbJ, PsbK, PsbL, PsbM, PsbT, PsbX, PsbY, PsbZ, Psb30/Ycf12, at least 3 peripheral proteins of the oxygen-evolving complex and a large number of cofactors. It forms dimeric complexes.</text>
</comment>
<comment type="subcellular location">
    <subcellularLocation>
        <location evidence="1">Plastid</location>
        <location evidence="1">Chloroplast thylakoid membrane</location>
        <topology evidence="1">Single-pass membrane protein</topology>
    </subcellularLocation>
</comment>
<comment type="similarity">
    <text evidence="1">Belongs to the PsbI family.</text>
</comment>
<evidence type="ECO:0000255" key="1">
    <source>
        <dbReference type="HAMAP-Rule" id="MF_01316"/>
    </source>
</evidence>
<feature type="chain" id="PRO_0000219619" description="Photosystem II reaction center protein I">
    <location>
        <begin position="1"/>
        <end position="36"/>
    </location>
</feature>
<feature type="transmembrane region" description="Helical" evidence="1">
    <location>
        <begin position="4"/>
        <end position="24"/>
    </location>
</feature>
<sequence length="36" mass="4168">MLTLKLFVYTVVIFFVSLFIFGFLSNDPGRNPGREE</sequence>
<dbReference type="EMBL" id="AJ428413">
    <property type="protein sequence ID" value="CAD28705.1"/>
    <property type="molecule type" value="Genomic_DNA"/>
</dbReference>
<dbReference type="RefSeq" id="NP_862738.1">
    <property type="nucleotide sequence ID" value="NC_004993.1"/>
</dbReference>
<dbReference type="SMR" id="Q7HKY2"/>
<dbReference type="GeneID" id="2598013"/>
<dbReference type="GO" id="GO:0009535">
    <property type="term" value="C:chloroplast thylakoid membrane"/>
    <property type="evidence" value="ECO:0007669"/>
    <property type="project" value="UniProtKB-SubCell"/>
</dbReference>
<dbReference type="GO" id="GO:0009539">
    <property type="term" value="C:photosystem II reaction center"/>
    <property type="evidence" value="ECO:0007669"/>
    <property type="project" value="InterPro"/>
</dbReference>
<dbReference type="GO" id="GO:0015979">
    <property type="term" value="P:photosynthesis"/>
    <property type="evidence" value="ECO:0007669"/>
    <property type="project" value="UniProtKB-UniRule"/>
</dbReference>
<dbReference type="HAMAP" id="MF_01316">
    <property type="entry name" value="PSII_PsbI"/>
    <property type="match status" value="1"/>
</dbReference>
<dbReference type="InterPro" id="IPR003686">
    <property type="entry name" value="PSII_PsbI"/>
</dbReference>
<dbReference type="InterPro" id="IPR037271">
    <property type="entry name" value="PSII_PsbI_sf"/>
</dbReference>
<dbReference type="NCBIfam" id="NF002735">
    <property type="entry name" value="PRK02655.1"/>
    <property type="match status" value="1"/>
</dbReference>
<dbReference type="PANTHER" id="PTHR35772">
    <property type="entry name" value="PHOTOSYSTEM II REACTION CENTER PROTEIN I"/>
    <property type="match status" value="1"/>
</dbReference>
<dbReference type="PANTHER" id="PTHR35772:SF1">
    <property type="entry name" value="PHOTOSYSTEM II REACTION CENTER PROTEIN I"/>
    <property type="match status" value="1"/>
</dbReference>
<dbReference type="Pfam" id="PF02532">
    <property type="entry name" value="PsbI"/>
    <property type="match status" value="1"/>
</dbReference>
<dbReference type="SUPFAM" id="SSF161041">
    <property type="entry name" value="Photosystem II reaction center protein I, PsbI"/>
    <property type="match status" value="1"/>
</dbReference>
<accession>Q7HKY2</accession>